<comment type="similarity">
    <text evidence="2">Belongs to the UPF0158 family.</text>
</comment>
<protein>
    <recommendedName>
        <fullName>UPF0158 protein CT_429</fullName>
    </recommendedName>
</protein>
<gene>
    <name type="ordered locus">CT_429</name>
</gene>
<accession>O84436</accession>
<sequence>MTTYPVPQNPLLLRVLRLMDAFSKSDDERDFYLDRVEGFIFYIDLDKDQEDLDKIYQELEENADRYCLIPKLTFYEIKKIMETFVNEKIYDIDTKEKFLEIVQSKNAREQFLEFLYDHETEQEKWQQFYVERSRIRIIEWLRNNQFQFVFEEDLDFSKHILEQLKVHLFDAKVSKELTQARQLLLNKSKVYYSNEALNPRPKRGRPPKQSAKVEAETTISSDIYTKVPSVARRFLFLPEITSPSSLTFSEKFDTEEEFLAHLRGGGRLEDQLNLAKFSERFDSLRELSAKLGYDSDGETGDFFDEEYDDEEEEIKPKKTTKRGRKKSRS</sequence>
<organism>
    <name type="scientific">Chlamydia trachomatis serovar D (strain ATCC VR-885 / DSM 19411 / UW-3/Cx)</name>
    <dbReference type="NCBI Taxonomy" id="272561"/>
    <lineage>
        <taxon>Bacteria</taxon>
        <taxon>Pseudomonadati</taxon>
        <taxon>Chlamydiota</taxon>
        <taxon>Chlamydiia</taxon>
        <taxon>Chlamydiales</taxon>
        <taxon>Chlamydiaceae</taxon>
        <taxon>Chlamydia/Chlamydophila group</taxon>
        <taxon>Chlamydia</taxon>
    </lineage>
</organism>
<reference key="1">
    <citation type="journal article" date="1998" name="Science">
        <title>Genome sequence of an obligate intracellular pathogen of humans: Chlamydia trachomatis.</title>
        <authorList>
            <person name="Stephens R.S."/>
            <person name="Kalman S."/>
            <person name="Lammel C.J."/>
            <person name="Fan J."/>
            <person name="Marathe R."/>
            <person name="Aravind L."/>
            <person name="Mitchell W.P."/>
            <person name="Olinger L."/>
            <person name="Tatusov R.L."/>
            <person name="Zhao Q."/>
            <person name="Koonin E.V."/>
            <person name="Davis R.W."/>
        </authorList>
    </citation>
    <scope>NUCLEOTIDE SEQUENCE [LARGE SCALE GENOMIC DNA]</scope>
    <source>
        <strain>ATCC VR-885 / DSM 19411 / UW-3/Cx</strain>
    </source>
</reference>
<name>Y429_CHLTR</name>
<proteinExistence type="inferred from homology"/>
<evidence type="ECO:0000256" key="1">
    <source>
        <dbReference type="SAM" id="MobiDB-lite"/>
    </source>
</evidence>
<evidence type="ECO:0000305" key="2"/>
<dbReference type="EMBL" id="AE001273">
    <property type="protein sequence ID" value="AAC68026.1"/>
    <property type="molecule type" value="Genomic_DNA"/>
</dbReference>
<dbReference type="PIR" id="E71516">
    <property type="entry name" value="E71516"/>
</dbReference>
<dbReference type="RefSeq" id="NP_219941.1">
    <property type="nucleotide sequence ID" value="NC_000117.1"/>
</dbReference>
<dbReference type="RefSeq" id="WP_009871783.1">
    <property type="nucleotide sequence ID" value="NC_000117.1"/>
</dbReference>
<dbReference type="SMR" id="O84436"/>
<dbReference type="STRING" id="272561.CT_429"/>
<dbReference type="EnsemblBacteria" id="AAC68026">
    <property type="protein sequence ID" value="AAC68026"/>
    <property type="gene ID" value="CT_429"/>
</dbReference>
<dbReference type="GeneID" id="884683"/>
<dbReference type="KEGG" id="ctr:CT_429"/>
<dbReference type="PATRIC" id="fig|272561.5.peg.464"/>
<dbReference type="HOGENOM" id="CLU_849148_0_0_0"/>
<dbReference type="InParanoid" id="O84436"/>
<dbReference type="OrthoDB" id="17355at2"/>
<dbReference type="Proteomes" id="UP000000431">
    <property type="component" value="Chromosome"/>
</dbReference>
<dbReference type="InterPro" id="IPR005361">
    <property type="entry name" value="UPF0158"/>
</dbReference>
<dbReference type="Pfam" id="PF03682">
    <property type="entry name" value="UPF0158"/>
    <property type="match status" value="1"/>
</dbReference>
<feature type="chain" id="PRO_0000220648" description="UPF0158 protein CT_429">
    <location>
        <begin position="1"/>
        <end position="329"/>
    </location>
</feature>
<feature type="region of interest" description="Disordered" evidence="1">
    <location>
        <begin position="292"/>
        <end position="329"/>
    </location>
</feature>
<feature type="compositionally biased region" description="Acidic residues" evidence="1">
    <location>
        <begin position="295"/>
        <end position="313"/>
    </location>
</feature>
<feature type="compositionally biased region" description="Basic residues" evidence="1">
    <location>
        <begin position="317"/>
        <end position="329"/>
    </location>
</feature>
<keyword id="KW-1185">Reference proteome</keyword>